<organism>
    <name type="scientific">Pseudomonas aeruginosa (strain ATCC 15692 / DSM 22644 / CIP 104116 / JCM 14847 / LMG 12228 / 1C / PRS 101 / PAO1)</name>
    <dbReference type="NCBI Taxonomy" id="208964"/>
    <lineage>
        <taxon>Bacteria</taxon>
        <taxon>Pseudomonadati</taxon>
        <taxon>Pseudomonadota</taxon>
        <taxon>Gammaproteobacteria</taxon>
        <taxon>Pseudomonadales</taxon>
        <taxon>Pseudomonadaceae</taxon>
        <taxon>Pseudomonas</taxon>
    </lineage>
</organism>
<proteinExistence type="evidence at protein level"/>
<name>PAGL_PSEAE</name>
<protein>
    <recommendedName>
        <fullName evidence="5 8">Lipid A deacylase PagL</fullName>
        <ecNumber evidence="2 3 4">3.1.1.77</ecNumber>
    </recommendedName>
    <alternativeName>
        <fullName evidence="6">LPS 3-O-deacylase PagL</fullName>
    </alternativeName>
    <alternativeName>
        <fullName evidence="6">Outer membrane enzyme PagL</fullName>
    </alternativeName>
    <alternativeName>
        <fullName evidence="6">PhoP/PhoQ-activated gene product L</fullName>
    </alternativeName>
</protein>
<accession>Q9HVD1</accession>
<reference evidence="8" key="1">
    <citation type="journal article" date="2000" name="Nature">
        <title>Complete genome sequence of Pseudomonas aeruginosa PAO1, an opportunistic pathogen.</title>
        <authorList>
            <person name="Stover C.K."/>
            <person name="Pham X.-Q.T."/>
            <person name="Erwin A.L."/>
            <person name="Mizoguchi S.D."/>
            <person name="Warrener P."/>
            <person name="Hickey M.J."/>
            <person name="Brinkman F.S.L."/>
            <person name="Hufnagle W.O."/>
            <person name="Kowalik D.J."/>
            <person name="Lagrou M."/>
            <person name="Garber R.L."/>
            <person name="Goltry L."/>
            <person name="Tolentino E."/>
            <person name="Westbrock-Wadman S."/>
            <person name="Yuan Y."/>
            <person name="Brody L.L."/>
            <person name="Coulter S.N."/>
            <person name="Folger K.R."/>
            <person name="Kas A."/>
            <person name="Larbig K."/>
            <person name="Lim R.M."/>
            <person name="Smith K.A."/>
            <person name="Spencer D.H."/>
            <person name="Wong G.K.-S."/>
            <person name="Wu Z."/>
            <person name="Paulsen I.T."/>
            <person name="Reizer J."/>
            <person name="Saier M.H. Jr."/>
            <person name="Hancock R.E.W."/>
            <person name="Lory S."/>
            <person name="Olson M.V."/>
        </authorList>
    </citation>
    <scope>NUCLEOTIDE SEQUENCE [LARGE SCALE GENOMIC DNA]</scope>
    <source>
        <strain>ATCC 15692 / DSM 22644 / CIP 104116 / JCM 14847 / LMG 12228 / 1C / PRS 101 / PAO1</strain>
    </source>
</reference>
<reference evidence="7" key="2">
    <citation type="journal article" date="2005" name="J. Biol. Chem.">
        <title>Dissemination of lipid A deacylases (pagL) among gram-negative bacteria: identification of active-site histidine and serine residues.</title>
        <authorList>
            <person name="Geurtsen J."/>
            <person name="Steeghs L."/>
            <person name="Hove J.T."/>
            <person name="van der Ley P."/>
            <person name="Tommassen J."/>
        </authorList>
    </citation>
    <scope>PROTEIN SEQUENCE OF 24-28</scope>
    <scope>FUNCTION</scope>
    <scope>CATALYTIC ACTIVITY</scope>
    <scope>SUBCELLULAR LOCATION</scope>
    <scope>DISRUPTION PHENOTYPE</scope>
    <scope>ACTIVE SITE</scope>
    <scope>MUTAGENESIS OF HIS-81; SER-84; HIS-149 AND SER-151</scope>
    <source>
        <strain evidence="2">ATCC 15692 / DSM 22644 / CIP 104116 / JCM 14847 / LMG 12228 / 1C / PRS 101 / PAO1</strain>
    </source>
</reference>
<reference evidence="7" key="3">
    <citation type="journal article" date="2006" name="J. Bacteriol.">
        <title>The Pseudomonas aeruginosa lipid A deacylase: selection for expression and loss within the cystic fibrosis airway.</title>
        <authorList>
            <person name="Ernst R.K."/>
            <person name="Adams K.N."/>
            <person name="Moskowitz S.M."/>
            <person name="Kraig G.M."/>
            <person name="Kawasaki K."/>
            <person name="Stead C.M."/>
            <person name="Trent M.S."/>
            <person name="Miller S.I."/>
        </authorList>
    </citation>
    <scope>FUNCTION</scope>
    <scope>CATALYTIC ACTIVITY</scope>
    <scope>ACTIVITY REGULATION</scope>
    <scope>SUBCELLULAR LOCATION</scope>
    <source>
        <strain evidence="3">ATCC 15692 / DSM 22644 / CIP 104116 / JCM 14847 / LMG 12228 / 1C / PRS 101 / PAO1</strain>
    </source>
</reference>
<reference evidence="7 9" key="4">
    <citation type="journal article" date="2006" name="Proc. Natl. Acad. Sci. U.S.A.">
        <title>Crystal structure and catalytic mechanism of the LPS 3-O-deacylase PagL from Pseudomonas aeruginosa.</title>
        <authorList>
            <person name="Rutten L."/>
            <person name="Geurtsen J."/>
            <person name="Lambert W."/>
            <person name="Smolenaers J.J."/>
            <person name="Bonvin A.M."/>
            <person name="de Haan A."/>
            <person name="van der Ley P."/>
            <person name="Egmond M.R."/>
            <person name="Gros P."/>
            <person name="Tommassen J."/>
        </authorList>
    </citation>
    <scope>X-RAY CRYSTALLOGRAPHY (2.00 ANGSTROMS) OF 24-173</scope>
    <scope>FUNCTION</scope>
    <scope>CATALYTIC ACTIVITY</scope>
    <scope>REACTION MECHANISM</scope>
    <scope>SUBUNIT</scope>
    <scope>SUBCELLULAR LOCATION</scope>
    <scope>PHARMACEUTICAL</scope>
    <scope>TOPOLOGY</scope>
    <scope>ACTIVE SITE</scope>
    <scope>SITE</scope>
    <scope>MUTAGENESIS OF ASN-152; ASN-159 AND GLU-163</scope>
    <source>
        <strain evidence="4">ATCC 15692 / DSM 22644 / CIP 104116 / JCM 14847 / LMG 12228 / 1C / PRS 101 / PAO1</strain>
    </source>
</reference>
<feature type="signal peptide" evidence="1 2">
    <location>
        <begin position="1"/>
        <end position="23"/>
    </location>
</feature>
<feature type="chain" id="PRO_0000422912" description="Lipid A deacylase PagL" evidence="1 2">
    <location>
        <begin position="24"/>
        <end position="173"/>
    </location>
</feature>
<feature type="topological domain" description="Periplasmic" evidence="4">
    <location>
        <begin position="25"/>
        <end position="28"/>
    </location>
</feature>
<feature type="transmembrane region" description="Beta stranded" evidence="4">
    <location>
        <begin position="29"/>
        <end position="32"/>
    </location>
</feature>
<feature type="topological domain" description="Periplasmic" evidence="4">
    <location>
        <position position="33"/>
    </location>
</feature>
<feature type="transmembrane region" description="Beta stranded" evidence="4">
    <location>
        <begin position="34"/>
        <end position="49"/>
    </location>
</feature>
<feature type="topological domain" description="Extracellular" evidence="4">
    <location>
        <begin position="50"/>
        <end position="56"/>
    </location>
</feature>
<feature type="transmembrane region" description="Beta stranded" evidence="4">
    <location>
        <begin position="57"/>
        <end position="71"/>
    </location>
</feature>
<feature type="topological domain" description="Periplasmic" evidence="4">
    <location>
        <begin position="72"/>
        <end position="73"/>
    </location>
</feature>
<feature type="transmembrane region" description="Beta stranded" evidence="4">
    <location>
        <begin position="74"/>
        <end position="89"/>
    </location>
</feature>
<feature type="topological domain" description="Extracellular" evidence="4">
    <location>
        <position position="90"/>
    </location>
</feature>
<feature type="transmembrane region" description="Beta stranded" evidence="4">
    <location>
        <begin position="91"/>
        <end position="93"/>
    </location>
</feature>
<feature type="topological domain" description="Periplasmic" evidence="4">
    <location>
        <begin position="94"/>
        <end position="95"/>
    </location>
</feature>
<feature type="transmembrane region" description="Beta stranded" evidence="4">
    <location>
        <begin position="96"/>
        <end position="98"/>
    </location>
</feature>
<feature type="topological domain" description="Extracellular" evidence="4">
    <location>
        <begin position="99"/>
        <end position="100"/>
    </location>
</feature>
<feature type="transmembrane region" description="Beta stranded" evidence="4">
    <location>
        <begin position="101"/>
        <end position="115"/>
    </location>
</feature>
<feature type="topological domain" description="Periplasmic" evidence="4">
    <location>
        <begin position="116"/>
        <end position="117"/>
    </location>
</feature>
<feature type="transmembrane region" description="Beta stranded" evidence="4">
    <location>
        <begin position="118"/>
        <end position="128"/>
    </location>
</feature>
<feature type="topological domain" description="Extracellular" evidence="4">
    <location>
        <begin position="129"/>
        <end position="138"/>
    </location>
</feature>
<feature type="transmembrane region" description="Beta stranded" evidence="4">
    <location>
        <begin position="139"/>
        <end position="148"/>
    </location>
</feature>
<feature type="topological domain" description="Periplasmic" evidence="4">
    <location>
        <begin position="149"/>
        <end position="173"/>
    </location>
</feature>
<feature type="active site" description="Charge relay system" evidence="2">
    <location>
        <position position="149"/>
    </location>
</feature>
<feature type="active site" description="Charge relay system" evidence="2">
    <location>
        <position position="151"/>
    </location>
</feature>
<feature type="active site" description="Charge relay system" evidence="4">
    <location>
        <position position="163"/>
    </location>
</feature>
<feature type="site" description="Critical for activity" evidence="4">
    <location>
        <position position="152"/>
    </location>
</feature>
<feature type="mutagenesis site" description="Does not affect LPS deacylation activity." evidence="2">
    <original>H</original>
    <variation>A</variation>
    <variation>N</variation>
    <location>
        <position position="81"/>
    </location>
</feature>
<feature type="mutagenesis site" description="Does not affect LPS deacylation activity." evidence="2">
    <original>S</original>
    <variation>A</variation>
    <variation>C</variation>
    <location>
        <position position="84"/>
    </location>
</feature>
<feature type="mutagenesis site" description="No deacylation of LPS." evidence="2">
    <original>H</original>
    <variation>A</variation>
    <variation>N</variation>
    <location>
        <position position="149"/>
    </location>
</feature>
<feature type="mutagenesis site" description="No deacylation of LPS." evidence="2">
    <original>S</original>
    <variation>A</variation>
    <variation>C</variation>
    <location>
        <position position="151"/>
    </location>
</feature>
<feature type="mutagenesis site" description="Inactive." evidence="4">
    <original>N</original>
    <variation>A</variation>
    <location>
        <position position="152"/>
    </location>
</feature>
<feature type="mutagenesis site" description="304-fold reduction in activity." evidence="4">
    <original>N</original>
    <variation>A</variation>
    <location>
        <position position="159"/>
    </location>
</feature>
<feature type="mutagenesis site" description="142-fold reduction in activity." evidence="4">
    <original>E</original>
    <variation>A</variation>
    <location>
        <position position="163"/>
    </location>
</feature>
<feature type="strand" evidence="10">
    <location>
        <begin position="25"/>
        <end position="32"/>
    </location>
</feature>
<feature type="strand" evidence="10">
    <location>
        <begin position="38"/>
        <end position="47"/>
    </location>
</feature>
<feature type="strand" evidence="10">
    <location>
        <begin position="52"/>
        <end position="55"/>
    </location>
</feature>
<feature type="strand" evidence="10">
    <location>
        <begin position="58"/>
        <end position="71"/>
    </location>
</feature>
<feature type="strand" evidence="10">
    <location>
        <begin position="78"/>
        <end position="93"/>
    </location>
</feature>
<feature type="strand" evidence="10">
    <location>
        <begin position="96"/>
        <end position="116"/>
    </location>
</feature>
<feature type="strand" evidence="10">
    <location>
        <begin position="124"/>
        <end position="137"/>
    </location>
</feature>
<feature type="strand" evidence="10">
    <location>
        <begin position="142"/>
        <end position="151"/>
    </location>
</feature>
<feature type="strand" evidence="10">
    <location>
        <begin position="162"/>
        <end position="172"/>
    </location>
</feature>
<sequence length="173" mass="18394">MKKLLPLAVLAALSSVHVASAQAADVSAAVGATGQSGMTYRLGLSWDWDKSWWQTSTGRLTGYWDAGYTYWEGGDEGAGKHSLSFAPVFVYEFAGDSIKPFIEAGIGVAAFSGTRVGDQNLGSSLNFEDRIGAGLKFANGQSVGVRAIHYSNAGLKQPNDGIESYSLFYKIPI</sequence>
<gene>
    <name evidence="8" type="primary">pagL</name>
    <name type="ordered locus">PA4661</name>
</gene>
<evidence type="ECO:0000255" key="1"/>
<evidence type="ECO:0000269" key="2">
    <source>
    </source>
</evidence>
<evidence type="ECO:0000269" key="3">
    <source>
    </source>
</evidence>
<evidence type="ECO:0000269" key="4">
    <source>
    </source>
</evidence>
<evidence type="ECO:0000303" key="5">
    <source>
    </source>
</evidence>
<evidence type="ECO:0000303" key="6">
    <source>
    </source>
</evidence>
<evidence type="ECO:0000305" key="7"/>
<evidence type="ECO:0000312" key="8">
    <source>
        <dbReference type="EMBL" id="AAG08048.1"/>
    </source>
</evidence>
<evidence type="ECO:0000312" key="9">
    <source>
        <dbReference type="PDB" id="2ERV"/>
    </source>
</evidence>
<evidence type="ECO:0007829" key="10">
    <source>
        <dbReference type="PDB" id="2ERV"/>
    </source>
</evidence>
<comment type="function">
    <text evidence="2 3 4">Has lipid A 3-O-deacylase activity. Hydrolyzes the ester bond at the 3 position of lipid A, a bioactive component of lipopolysaccharide (LPS), thereby releasing the primary fatty acyl moiety. Lacks fatty acyl chain-length specificity as removes both 3-OH C10 and 3-OH C14 fatty acids from lipid A.</text>
</comment>
<comment type="catalytic activity">
    <reaction evidence="2 3 4">
        <text>a 3-(acyloxy)acyl derivative of bacterial toxin + H2O = a 3-hydroxyacyl derivative of bacterial toxin + a fatty acid + H(+)</text>
        <dbReference type="Rhea" id="RHEA:12032"/>
        <dbReference type="ChEBI" id="CHEBI:15377"/>
        <dbReference type="ChEBI" id="CHEBI:15378"/>
        <dbReference type="ChEBI" id="CHEBI:28868"/>
        <dbReference type="ChEBI" id="CHEBI:136853"/>
        <dbReference type="ChEBI" id="CHEBI:140675"/>
        <dbReference type="EC" id="3.1.1.77"/>
    </reaction>
</comment>
<comment type="activity regulation">
    <text evidence="3">Decreased activity at low temperatures (15 or 21 degrees Celsius).</text>
</comment>
<comment type="subunit">
    <text evidence="4">Homodimer.</text>
</comment>
<comment type="subcellular location">
    <subcellularLocation>
        <location evidence="2 3 4">Cell outer membrane</location>
        <topology evidence="2 3 4">Multi-pass membrane protein</topology>
    </subcellularLocation>
</comment>
<comment type="disruption phenotype">
    <text evidence="2">Has similar growth characteristics to wild-type in LB medium at different temperatures (25, 30 or 37 degrees Celsius) or in LB medium supplemented with 0-4 M sodium chloride, 0-1,500 ug/ml chloramphenicol, 0-5% ethanol or 0-1% chloroform. Only when chloramphenicol is present in the medium is a difference in the ability to grow observed. The difference is most pronounced at a concentration of 650 ug/ml chloramphenicol, where the absorbance of the wild-type culture after overnight growth is 1.7-fold higher than that of the pagL disruption mutant.</text>
</comment>
<comment type="pharmaceutical">
    <text evidence="6">Might be useful for the development of new vaccines or adjuvants because of its LPS-modifying properties. May be used for the design of inhibitors with possible therapeutic value.</text>
</comment>
<comment type="similarity">
    <text evidence="7">Belongs to the PagL family.</text>
</comment>
<dbReference type="EC" id="3.1.1.77" evidence="2 3 4"/>
<dbReference type="EMBL" id="AE004091">
    <property type="protein sequence ID" value="AAG08048.1"/>
    <property type="molecule type" value="Genomic_DNA"/>
</dbReference>
<dbReference type="PIR" id="F83062">
    <property type="entry name" value="F83062"/>
</dbReference>
<dbReference type="RefSeq" id="NP_253350.1">
    <property type="nucleotide sequence ID" value="NC_002516.2"/>
</dbReference>
<dbReference type="RefSeq" id="WP_003099307.1">
    <property type="nucleotide sequence ID" value="NZ_QZGE01000029.1"/>
</dbReference>
<dbReference type="PDB" id="2ERV">
    <property type="method" value="X-ray"/>
    <property type="resolution" value="2.00 A"/>
    <property type="chains" value="A/B=24-173"/>
</dbReference>
<dbReference type="PDBsum" id="2ERV"/>
<dbReference type="SMR" id="Q9HVD1"/>
<dbReference type="STRING" id="208964.PA4661"/>
<dbReference type="PaxDb" id="208964-PA4661"/>
<dbReference type="GeneID" id="881344"/>
<dbReference type="KEGG" id="pae:PA4661"/>
<dbReference type="PATRIC" id="fig|208964.12.peg.4883"/>
<dbReference type="PseudoCAP" id="PA4661"/>
<dbReference type="HOGENOM" id="CLU_093405_1_0_6"/>
<dbReference type="InParanoid" id="Q9HVD1"/>
<dbReference type="OrthoDB" id="9797122at2"/>
<dbReference type="PhylomeDB" id="Q9HVD1"/>
<dbReference type="BioCyc" id="PAER208964:G1FZ6-4757-MONOMER"/>
<dbReference type="EvolutionaryTrace" id="Q9HVD1"/>
<dbReference type="Proteomes" id="UP000002438">
    <property type="component" value="Chromosome"/>
</dbReference>
<dbReference type="GO" id="GO:0009279">
    <property type="term" value="C:cell outer membrane"/>
    <property type="evidence" value="ECO:0000314"/>
    <property type="project" value="UniProtKB"/>
</dbReference>
<dbReference type="GO" id="GO:0016020">
    <property type="term" value="C:membrane"/>
    <property type="evidence" value="ECO:0000314"/>
    <property type="project" value="UniProtKB"/>
</dbReference>
<dbReference type="GO" id="GO:0050528">
    <property type="term" value="F:acyloxyacyl hydrolase activity"/>
    <property type="evidence" value="ECO:0000314"/>
    <property type="project" value="UniProtKB"/>
</dbReference>
<dbReference type="GO" id="GO:0042803">
    <property type="term" value="F:protein homodimerization activity"/>
    <property type="evidence" value="ECO:0000314"/>
    <property type="project" value="UniProtKB"/>
</dbReference>
<dbReference type="GO" id="GO:0046493">
    <property type="term" value="P:lipid A metabolic process"/>
    <property type="evidence" value="ECO:0000314"/>
    <property type="project" value="UniProtKB"/>
</dbReference>
<dbReference type="GO" id="GO:0008653">
    <property type="term" value="P:lipopolysaccharide metabolic process"/>
    <property type="evidence" value="ECO:0000314"/>
    <property type="project" value="UniProtKB"/>
</dbReference>
<dbReference type="FunFam" id="2.40.160.20:FF:000016">
    <property type="entry name" value="Lipid A deacylase"/>
    <property type="match status" value="1"/>
</dbReference>
<dbReference type="Gene3D" id="2.40.160.20">
    <property type="match status" value="1"/>
</dbReference>
<dbReference type="InterPro" id="IPR018550">
    <property type="entry name" value="Lipid-A_deacylase-rel"/>
</dbReference>
<dbReference type="InterPro" id="IPR011250">
    <property type="entry name" value="OMP/PagP_b-brl"/>
</dbReference>
<dbReference type="Pfam" id="PF09411">
    <property type="entry name" value="PagL"/>
    <property type="match status" value="1"/>
</dbReference>
<dbReference type="PIRSF" id="PIRSF029681">
    <property type="entry name" value="PagL"/>
    <property type="match status" value="1"/>
</dbReference>
<dbReference type="SUPFAM" id="SSF56925">
    <property type="entry name" value="OMPA-like"/>
    <property type="match status" value="1"/>
</dbReference>
<keyword id="KW-0002">3D-structure</keyword>
<keyword id="KW-0998">Cell outer membrane</keyword>
<keyword id="KW-0903">Direct protein sequencing</keyword>
<keyword id="KW-0378">Hydrolase</keyword>
<keyword id="KW-0472">Membrane</keyword>
<keyword id="KW-0582">Pharmaceutical</keyword>
<keyword id="KW-1185">Reference proteome</keyword>
<keyword id="KW-0732">Signal</keyword>
<keyword id="KW-0812">Transmembrane</keyword>
<keyword id="KW-1134">Transmembrane beta strand</keyword>